<evidence type="ECO:0000255" key="1">
    <source>
        <dbReference type="HAMAP-Rule" id="MF_00342"/>
    </source>
</evidence>
<accession>C3MVB7</accession>
<comment type="similarity">
    <text evidence="1">Belongs to the UPF0147 family.</text>
</comment>
<organism>
    <name type="scientific">Saccharolobus islandicus (strain M.14.25 / Kamchatka #1)</name>
    <name type="common">Sulfolobus islandicus</name>
    <dbReference type="NCBI Taxonomy" id="427317"/>
    <lineage>
        <taxon>Archaea</taxon>
        <taxon>Thermoproteota</taxon>
        <taxon>Thermoprotei</taxon>
        <taxon>Sulfolobales</taxon>
        <taxon>Sulfolobaceae</taxon>
        <taxon>Saccharolobus</taxon>
    </lineage>
</organism>
<protein>
    <recommendedName>
        <fullName evidence="1">UPF0147 protein M1425_1358</fullName>
    </recommendedName>
</protein>
<dbReference type="EMBL" id="CP001400">
    <property type="protein sequence ID" value="ACP38112.1"/>
    <property type="molecule type" value="Genomic_DNA"/>
</dbReference>
<dbReference type="RefSeq" id="WP_010923074.1">
    <property type="nucleotide sequence ID" value="NC_012588.1"/>
</dbReference>
<dbReference type="SMR" id="C3MVB7"/>
<dbReference type="KEGG" id="sia:M1425_1358"/>
<dbReference type="HOGENOM" id="CLU_165882_0_0_2"/>
<dbReference type="Proteomes" id="UP000001350">
    <property type="component" value="Chromosome"/>
</dbReference>
<dbReference type="Gene3D" id="1.20.1440.50">
    <property type="entry name" value="Ta0600-like"/>
    <property type="match status" value="1"/>
</dbReference>
<dbReference type="HAMAP" id="MF_00342">
    <property type="entry name" value="UPF0147"/>
    <property type="match status" value="1"/>
</dbReference>
<dbReference type="InterPro" id="IPR023130">
    <property type="entry name" value="Ta0600-like_sf"/>
</dbReference>
<dbReference type="InterPro" id="IPR005354">
    <property type="entry name" value="UPF0147"/>
</dbReference>
<dbReference type="NCBIfam" id="NF003319">
    <property type="entry name" value="PRK04330.1"/>
    <property type="match status" value="1"/>
</dbReference>
<dbReference type="Pfam" id="PF03685">
    <property type="entry name" value="UPF0147"/>
    <property type="match status" value="1"/>
</dbReference>
<dbReference type="SUPFAM" id="SSF158436">
    <property type="entry name" value="Ta0600-like"/>
    <property type="match status" value="1"/>
</dbReference>
<gene>
    <name type="ordered locus">M1425_1358</name>
</gene>
<name>Y1358_SACI4</name>
<sequence>MSMPYDNEAKIKQAVILLQKIVNDTSVPRNIRRAATDAIRNLQDLGLSPAVRAANAIGILEDISQDPNMPTHARISIWNVVSILETVKD</sequence>
<feature type="chain" id="PRO_1000205279" description="UPF0147 protein M1425_1358">
    <location>
        <begin position="1"/>
        <end position="89"/>
    </location>
</feature>
<proteinExistence type="inferred from homology"/>
<reference key="1">
    <citation type="journal article" date="2009" name="Proc. Natl. Acad. Sci. U.S.A.">
        <title>Biogeography of the Sulfolobus islandicus pan-genome.</title>
        <authorList>
            <person name="Reno M.L."/>
            <person name="Held N.L."/>
            <person name="Fields C.J."/>
            <person name="Burke P.V."/>
            <person name="Whitaker R.J."/>
        </authorList>
    </citation>
    <scope>NUCLEOTIDE SEQUENCE [LARGE SCALE GENOMIC DNA]</scope>
    <source>
        <strain>M.14.25 / Kamchatka #1</strain>
    </source>
</reference>